<organism>
    <name type="scientific">Limosilactobacillus fermentum (strain NBRC 3956 / LMG 18251)</name>
    <name type="common">Lactobacillus fermentum</name>
    <dbReference type="NCBI Taxonomy" id="334390"/>
    <lineage>
        <taxon>Bacteria</taxon>
        <taxon>Bacillati</taxon>
        <taxon>Bacillota</taxon>
        <taxon>Bacilli</taxon>
        <taxon>Lactobacillales</taxon>
        <taxon>Lactobacillaceae</taxon>
        <taxon>Limosilactobacillus</taxon>
    </lineage>
</organism>
<evidence type="ECO:0000255" key="1">
    <source>
        <dbReference type="HAMAP-Rule" id="MF_00394"/>
    </source>
</evidence>
<protein>
    <recommendedName>
        <fullName evidence="1">Glycerol-3-phosphate dehydrogenase [NAD(P)+]</fullName>
        <ecNumber evidence="1">1.1.1.94</ecNumber>
    </recommendedName>
    <alternativeName>
        <fullName evidence="1">NAD(P)(+)-dependent glycerol-3-phosphate dehydrogenase</fullName>
    </alternativeName>
    <alternativeName>
        <fullName evidence="1">NAD(P)H-dependent dihydroxyacetone-phosphate reductase</fullName>
    </alternativeName>
</protein>
<feature type="chain" id="PRO_1000190161" description="Glycerol-3-phosphate dehydrogenase [NAD(P)+]">
    <location>
        <begin position="1"/>
        <end position="337"/>
    </location>
</feature>
<feature type="active site" description="Proton acceptor" evidence="1">
    <location>
        <position position="195"/>
    </location>
</feature>
<feature type="binding site" evidence="1">
    <location>
        <position position="11"/>
    </location>
    <ligand>
        <name>NADPH</name>
        <dbReference type="ChEBI" id="CHEBI:57783"/>
    </ligand>
</feature>
<feature type="binding site" evidence="1">
    <location>
        <position position="12"/>
    </location>
    <ligand>
        <name>NADPH</name>
        <dbReference type="ChEBI" id="CHEBI:57783"/>
    </ligand>
</feature>
<feature type="binding site" evidence="1">
    <location>
        <position position="32"/>
    </location>
    <ligand>
        <name>NADPH</name>
        <dbReference type="ChEBI" id="CHEBI:57783"/>
    </ligand>
</feature>
<feature type="binding site" evidence="1">
    <location>
        <position position="109"/>
    </location>
    <ligand>
        <name>NADPH</name>
        <dbReference type="ChEBI" id="CHEBI:57783"/>
    </ligand>
</feature>
<feature type="binding site" evidence="1">
    <location>
        <position position="109"/>
    </location>
    <ligand>
        <name>sn-glycerol 3-phosphate</name>
        <dbReference type="ChEBI" id="CHEBI:57597"/>
    </ligand>
</feature>
<feature type="binding site" evidence="1">
    <location>
        <position position="140"/>
    </location>
    <ligand>
        <name>sn-glycerol 3-phosphate</name>
        <dbReference type="ChEBI" id="CHEBI:57597"/>
    </ligand>
</feature>
<feature type="binding site" evidence="1">
    <location>
        <position position="142"/>
    </location>
    <ligand>
        <name>sn-glycerol 3-phosphate</name>
        <dbReference type="ChEBI" id="CHEBI:57597"/>
    </ligand>
</feature>
<feature type="binding site" evidence="1">
    <location>
        <position position="144"/>
    </location>
    <ligand>
        <name>NADPH</name>
        <dbReference type="ChEBI" id="CHEBI:57783"/>
    </ligand>
</feature>
<feature type="binding site" evidence="1">
    <location>
        <position position="195"/>
    </location>
    <ligand>
        <name>sn-glycerol 3-phosphate</name>
        <dbReference type="ChEBI" id="CHEBI:57597"/>
    </ligand>
</feature>
<feature type="binding site" evidence="1">
    <location>
        <position position="248"/>
    </location>
    <ligand>
        <name>sn-glycerol 3-phosphate</name>
        <dbReference type="ChEBI" id="CHEBI:57597"/>
    </ligand>
</feature>
<feature type="binding site" evidence="1">
    <location>
        <position position="258"/>
    </location>
    <ligand>
        <name>sn-glycerol 3-phosphate</name>
        <dbReference type="ChEBI" id="CHEBI:57597"/>
    </ligand>
</feature>
<feature type="binding site" evidence="1">
    <location>
        <position position="259"/>
    </location>
    <ligand>
        <name>NADPH</name>
        <dbReference type="ChEBI" id="CHEBI:57783"/>
    </ligand>
</feature>
<feature type="binding site" evidence="1">
    <location>
        <position position="259"/>
    </location>
    <ligand>
        <name>sn-glycerol 3-phosphate</name>
        <dbReference type="ChEBI" id="CHEBI:57597"/>
    </ligand>
</feature>
<feature type="binding site" evidence="1">
    <location>
        <position position="260"/>
    </location>
    <ligand>
        <name>sn-glycerol 3-phosphate</name>
        <dbReference type="ChEBI" id="CHEBI:57597"/>
    </ligand>
</feature>
<feature type="binding site" evidence="1">
    <location>
        <position position="283"/>
    </location>
    <ligand>
        <name>NADPH</name>
        <dbReference type="ChEBI" id="CHEBI:57783"/>
    </ligand>
</feature>
<feature type="binding site" evidence="1">
    <location>
        <position position="285"/>
    </location>
    <ligand>
        <name>NADPH</name>
        <dbReference type="ChEBI" id="CHEBI:57783"/>
    </ligand>
</feature>
<name>GPDA_LIMF3</name>
<reference key="1">
    <citation type="journal article" date="2008" name="DNA Res.">
        <title>Comparative genome analysis of Lactobacillus reuteri and Lactobacillus fermentum reveal a genomic island for reuterin and cobalamin production.</title>
        <authorList>
            <person name="Morita H."/>
            <person name="Toh H."/>
            <person name="Fukuda S."/>
            <person name="Horikawa H."/>
            <person name="Oshima K."/>
            <person name="Suzuki T."/>
            <person name="Murakami M."/>
            <person name="Hisamatsu S."/>
            <person name="Kato Y."/>
            <person name="Takizawa T."/>
            <person name="Fukuoka H."/>
            <person name="Yoshimura T."/>
            <person name="Itoh K."/>
            <person name="O'Sullivan D.J."/>
            <person name="McKay L.L."/>
            <person name="Ohno H."/>
            <person name="Kikuchi J."/>
            <person name="Masaoka T."/>
            <person name="Hattori M."/>
        </authorList>
    </citation>
    <scope>NUCLEOTIDE SEQUENCE [LARGE SCALE GENOMIC DNA]</scope>
    <source>
        <strain>NBRC 3956 / LMG 18251</strain>
    </source>
</reference>
<accession>B2GAJ3</accession>
<dbReference type="EC" id="1.1.1.94" evidence="1"/>
<dbReference type="EMBL" id="AP008937">
    <property type="protein sequence ID" value="BAG26675.1"/>
    <property type="molecule type" value="Genomic_DNA"/>
</dbReference>
<dbReference type="SMR" id="B2GAJ3"/>
<dbReference type="KEGG" id="lfe:LAF_0339"/>
<dbReference type="eggNOG" id="COG0240">
    <property type="taxonomic scope" value="Bacteria"/>
</dbReference>
<dbReference type="HOGENOM" id="CLU_033449_0_2_9"/>
<dbReference type="UniPathway" id="UPA00940"/>
<dbReference type="Proteomes" id="UP000001697">
    <property type="component" value="Chromosome"/>
</dbReference>
<dbReference type="GO" id="GO:0005829">
    <property type="term" value="C:cytosol"/>
    <property type="evidence" value="ECO:0007669"/>
    <property type="project" value="TreeGrafter"/>
</dbReference>
<dbReference type="GO" id="GO:0047952">
    <property type="term" value="F:glycerol-3-phosphate dehydrogenase [NAD(P)+] activity"/>
    <property type="evidence" value="ECO:0007669"/>
    <property type="project" value="UniProtKB-UniRule"/>
</dbReference>
<dbReference type="GO" id="GO:0051287">
    <property type="term" value="F:NAD binding"/>
    <property type="evidence" value="ECO:0007669"/>
    <property type="project" value="InterPro"/>
</dbReference>
<dbReference type="GO" id="GO:0005975">
    <property type="term" value="P:carbohydrate metabolic process"/>
    <property type="evidence" value="ECO:0007669"/>
    <property type="project" value="InterPro"/>
</dbReference>
<dbReference type="GO" id="GO:0046167">
    <property type="term" value="P:glycerol-3-phosphate biosynthetic process"/>
    <property type="evidence" value="ECO:0007669"/>
    <property type="project" value="UniProtKB-UniRule"/>
</dbReference>
<dbReference type="GO" id="GO:0046168">
    <property type="term" value="P:glycerol-3-phosphate catabolic process"/>
    <property type="evidence" value="ECO:0007669"/>
    <property type="project" value="InterPro"/>
</dbReference>
<dbReference type="GO" id="GO:0006650">
    <property type="term" value="P:glycerophospholipid metabolic process"/>
    <property type="evidence" value="ECO:0007669"/>
    <property type="project" value="UniProtKB-UniRule"/>
</dbReference>
<dbReference type="GO" id="GO:0008654">
    <property type="term" value="P:phospholipid biosynthetic process"/>
    <property type="evidence" value="ECO:0007669"/>
    <property type="project" value="UniProtKB-KW"/>
</dbReference>
<dbReference type="FunFam" id="1.10.1040.10:FF:000001">
    <property type="entry name" value="Glycerol-3-phosphate dehydrogenase [NAD(P)+]"/>
    <property type="match status" value="1"/>
</dbReference>
<dbReference type="FunFam" id="3.40.50.720:FF:000019">
    <property type="entry name" value="Glycerol-3-phosphate dehydrogenase [NAD(P)+]"/>
    <property type="match status" value="1"/>
</dbReference>
<dbReference type="Gene3D" id="1.10.1040.10">
    <property type="entry name" value="N-(1-d-carboxylethyl)-l-norvaline Dehydrogenase, domain 2"/>
    <property type="match status" value="1"/>
</dbReference>
<dbReference type="Gene3D" id="3.40.50.720">
    <property type="entry name" value="NAD(P)-binding Rossmann-like Domain"/>
    <property type="match status" value="1"/>
</dbReference>
<dbReference type="HAMAP" id="MF_00394">
    <property type="entry name" value="NAD_Glyc3P_dehydrog"/>
    <property type="match status" value="1"/>
</dbReference>
<dbReference type="InterPro" id="IPR008927">
    <property type="entry name" value="6-PGluconate_DH-like_C_sf"/>
</dbReference>
<dbReference type="InterPro" id="IPR013328">
    <property type="entry name" value="6PGD_dom2"/>
</dbReference>
<dbReference type="InterPro" id="IPR006168">
    <property type="entry name" value="G3P_DH_NAD-dep"/>
</dbReference>
<dbReference type="InterPro" id="IPR006109">
    <property type="entry name" value="G3P_DH_NAD-dep_C"/>
</dbReference>
<dbReference type="InterPro" id="IPR011128">
    <property type="entry name" value="G3P_DH_NAD-dep_N"/>
</dbReference>
<dbReference type="InterPro" id="IPR036291">
    <property type="entry name" value="NAD(P)-bd_dom_sf"/>
</dbReference>
<dbReference type="NCBIfam" id="NF000940">
    <property type="entry name" value="PRK00094.1-2"/>
    <property type="match status" value="1"/>
</dbReference>
<dbReference type="NCBIfam" id="NF000941">
    <property type="entry name" value="PRK00094.1-3"/>
    <property type="match status" value="1"/>
</dbReference>
<dbReference type="NCBIfam" id="NF000942">
    <property type="entry name" value="PRK00094.1-4"/>
    <property type="match status" value="1"/>
</dbReference>
<dbReference type="PANTHER" id="PTHR11728">
    <property type="entry name" value="GLYCEROL-3-PHOSPHATE DEHYDROGENASE"/>
    <property type="match status" value="1"/>
</dbReference>
<dbReference type="PANTHER" id="PTHR11728:SF1">
    <property type="entry name" value="GLYCEROL-3-PHOSPHATE DEHYDROGENASE [NAD(+)] 2, CHLOROPLASTIC"/>
    <property type="match status" value="1"/>
</dbReference>
<dbReference type="Pfam" id="PF07479">
    <property type="entry name" value="NAD_Gly3P_dh_C"/>
    <property type="match status" value="1"/>
</dbReference>
<dbReference type="Pfam" id="PF01210">
    <property type="entry name" value="NAD_Gly3P_dh_N"/>
    <property type="match status" value="1"/>
</dbReference>
<dbReference type="PIRSF" id="PIRSF000114">
    <property type="entry name" value="Glycerol-3-P_dh"/>
    <property type="match status" value="1"/>
</dbReference>
<dbReference type="PRINTS" id="PR00077">
    <property type="entry name" value="GPDHDRGNASE"/>
</dbReference>
<dbReference type="SUPFAM" id="SSF48179">
    <property type="entry name" value="6-phosphogluconate dehydrogenase C-terminal domain-like"/>
    <property type="match status" value="1"/>
</dbReference>
<dbReference type="SUPFAM" id="SSF51735">
    <property type="entry name" value="NAD(P)-binding Rossmann-fold domains"/>
    <property type="match status" value="1"/>
</dbReference>
<gene>
    <name evidence="1" type="primary">gpsA</name>
    <name type="ordered locus">LAF_0339</name>
</gene>
<keyword id="KW-0963">Cytoplasm</keyword>
<keyword id="KW-0444">Lipid biosynthesis</keyword>
<keyword id="KW-0443">Lipid metabolism</keyword>
<keyword id="KW-0520">NAD</keyword>
<keyword id="KW-0521">NADP</keyword>
<keyword id="KW-0547">Nucleotide-binding</keyword>
<keyword id="KW-0560">Oxidoreductase</keyword>
<keyword id="KW-0594">Phospholipid biosynthesis</keyword>
<keyword id="KW-1208">Phospholipid metabolism</keyword>
<keyword id="KW-1185">Reference proteome</keyword>
<sequence length="337" mass="36120">MKKVAVLGAGSWGSVLANLLVENGHQVMLWSRNQAQVDQLNQEHKNPHYMKDFTYNEGLVATSDMQAAVSGAAVILMVIPTKGVRQVAGQLAELLNGVTPAPLLVHATKGLEQNTYKRVSEMLAEEIPAASRRGIVVLSGPSHAEDVAIKDVTAVTAACGDLACAKEIQELFSNHYFRVYTNDDVIGAEFGAALKNIIALGSGALSGLGYHDNARAALITRGLAEIRRLGVAFGADPMTFIGLSGVGDLVVTATSKNSRNWRAGYQLGQGQKLADVVENMGMVIEGVATTKAAYELAQKRHVQMPITAALYRVLYEDEDIKSAIDGLMEREVTSEKE</sequence>
<proteinExistence type="inferred from homology"/>
<comment type="function">
    <text evidence="1">Catalyzes the reduction of the glycolytic intermediate dihydroxyacetone phosphate (DHAP) to sn-glycerol 3-phosphate (G3P), the key precursor for phospholipid synthesis.</text>
</comment>
<comment type="catalytic activity">
    <reaction evidence="1">
        <text>sn-glycerol 3-phosphate + NAD(+) = dihydroxyacetone phosphate + NADH + H(+)</text>
        <dbReference type="Rhea" id="RHEA:11092"/>
        <dbReference type="ChEBI" id="CHEBI:15378"/>
        <dbReference type="ChEBI" id="CHEBI:57540"/>
        <dbReference type="ChEBI" id="CHEBI:57597"/>
        <dbReference type="ChEBI" id="CHEBI:57642"/>
        <dbReference type="ChEBI" id="CHEBI:57945"/>
        <dbReference type="EC" id="1.1.1.94"/>
    </reaction>
    <physiologicalReaction direction="right-to-left" evidence="1">
        <dbReference type="Rhea" id="RHEA:11094"/>
    </physiologicalReaction>
</comment>
<comment type="catalytic activity">
    <reaction evidence="1">
        <text>sn-glycerol 3-phosphate + NADP(+) = dihydroxyacetone phosphate + NADPH + H(+)</text>
        <dbReference type="Rhea" id="RHEA:11096"/>
        <dbReference type="ChEBI" id="CHEBI:15378"/>
        <dbReference type="ChEBI" id="CHEBI:57597"/>
        <dbReference type="ChEBI" id="CHEBI:57642"/>
        <dbReference type="ChEBI" id="CHEBI:57783"/>
        <dbReference type="ChEBI" id="CHEBI:58349"/>
        <dbReference type="EC" id="1.1.1.94"/>
    </reaction>
    <physiologicalReaction direction="right-to-left" evidence="1">
        <dbReference type="Rhea" id="RHEA:11098"/>
    </physiologicalReaction>
</comment>
<comment type="pathway">
    <text evidence="1">Membrane lipid metabolism; glycerophospholipid metabolism.</text>
</comment>
<comment type="subcellular location">
    <subcellularLocation>
        <location evidence="1">Cytoplasm</location>
    </subcellularLocation>
</comment>
<comment type="similarity">
    <text evidence="1">Belongs to the NAD-dependent glycerol-3-phosphate dehydrogenase family.</text>
</comment>